<comment type="function">
    <text evidence="1">NAD-dependent lysine deacetylase and desuccinylase that specifically removes acetyl and succinyl groups on target proteins. Modulates the activities of several proteins which are inactive in their acylated form. Deacetylates the N-terminal lysine residue of Alba, the major archaeal chromatin protein and that, in turn, increases Alba's DNA binding affinity, thereby repressing transcription.</text>
</comment>
<comment type="catalytic activity">
    <reaction evidence="1">
        <text>N(6)-acetyl-L-lysyl-[protein] + NAD(+) + H2O = 2''-O-acetyl-ADP-D-ribose + nicotinamide + L-lysyl-[protein]</text>
        <dbReference type="Rhea" id="RHEA:43636"/>
        <dbReference type="Rhea" id="RHEA-COMP:9752"/>
        <dbReference type="Rhea" id="RHEA-COMP:10731"/>
        <dbReference type="ChEBI" id="CHEBI:15377"/>
        <dbReference type="ChEBI" id="CHEBI:17154"/>
        <dbReference type="ChEBI" id="CHEBI:29969"/>
        <dbReference type="ChEBI" id="CHEBI:57540"/>
        <dbReference type="ChEBI" id="CHEBI:61930"/>
        <dbReference type="ChEBI" id="CHEBI:83767"/>
        <dbReference type="EC" id="2.3.1.286"/>
    </reaction>
</comment>
<comment type="catalytic activity">
    <reaction evidence="1">
        <text>N(6)-succinyl-L-lysyl-[protein] + NAD(+) + H2O = 2''-O-succinyl-ADP-D-ribose + nicotinamide + L-lysyl-[protein]</text>
        <dbReference type="Rhea" id="RHEA:47668"/>
        <dbReference type="Rhea" id="RHEA-COMP:9752"/>
        <dbReference type="Rhea" id="RHEA-COMP:11877"/>
        <dbReference type="ChEBI" id="CHEBI:15377"/>
        <dbReference type="ChEBI" id="CHEBI:17154"/>
        <dbReference type="ChEBI" id="CHEBI:29969"/>
        <dbReference type="ChEBI" id="CHEBI:57540"/>
        <dbReference type="ChEBI" id="CHEBI:87830"/>
        <dbReference type="ChEBI" id="CHEBI:87832"/>
    </reaction>
</comment>
<comment type="cofactor">
    <cofactor evidence="1">
        <name>Zn(2+)</name>
        <dbReference type="ChEBI" id="CHEBI:29105"/>
    </cofactor>
    <text evidence="1">Binds 1 zinc ion per subunit.</text>
</comment>
<comment type="subcellular location">
    <subcellularLocation>
        <location evidence="1">Cytoplasm</location>
    </subcellularLocation>
</comment>
<comment type="domain">
    <text evidence="1">2 residues (Tyr-62 and Arg-65) present in a large hydrophobic pocket are probably involved in substrate specificity. They are important for desuccinylation activity, but dispensable for deacetylation activity.</text>
</comment>
<comment type="similarity">
    <text evidence="1">Belongs to the sirtuin family. Class III subfamily.</text>
</comment>
<feature type="chain" id="PRO_0000110383" description="NAD-dependent protein deacylase 2">
    <location>
        <begin position="1"/>
        <end position="249"/>
    </location>
</feature>
<feature type="domain" description="Deacetylase sirtuin-type" evidence="2">
    <location>
        <begin position="1"/>
        <end position="240"/>
    </location>
</feature>
<feature type="active site" description="Proton acceptor" evidence="2">
    <location>
        <position position="114"/>
    </location>
</feature>
<feature type="binding site" evidence="1">
    <location>
        <begin position="18"/>
        <end position="37"/>
    </location>
    <ligand>
        <name>NAD(+)</name>
        <dbReference type="ChEBI" id="CHEBI:57540"/>
    </ligand>
</feature>
<feature type="binding site" evidence="1">
    <location>
        <position position="62"/>
    </location>
    <ligand>
        <name>substrate</name>
    </ligand>
</feature>
<feature type="binding site" evidence="1">
    <location>
        <position position="65"/>
    </location>
    <ligand>
        <name>substrate</name>
    </ligand>
</feature>
<feature type="binding site" evidence="1">
    <location>
        <begin position="96"/>
        <end position="99"/>
    </location>
    <ligand>
        <name>NAD(+)</name>
        <dbReference type="ChEBI" id="CHEBI:57540"/>
    </ligand>
</feature>
<feature type="binding site" evidence="1">
    <location>
        <position position="122"/>
    </location>
    <ligand>
        <name>Zn(2+)</name>
        <dbReference type="ChEBI" id="CHEBI:29105"/>
    </ligand>
</feature>
<feature type="binding site" evidence="1">
    <location>
        <position position="125"/>
    </location>
    <ligand>
        <name>Zn(2+)</name>
        <dbReference type="ChEBI" id="CHEBI:29105"/>
    </ligand>
</feature>
<feature type="binding site" evidence="1">
    <location>
        <position position="142"/>
    </location>
    <ligand>
        <name>Zn(2+)</name>
        <dbReference type="ChEBI" id="CHEBI:29105"/>
    </ligand>
</feature>
<feature type="binding site" evidence="1">
    <location>
        <position position="145"/>
    </location>
    <ligand>
        <name>Zn(2+)</name>
        <dbReference type="ChEBI" id="CHEBI:29105"/>
    </ligand>
</feature>
<feature type="binding site" evidence="1">
    <location>
        <begin position="182"/>
        <end position="184"/>
    </location>
    <ligand>
        <name>NAD(+)</name>
        <dbReference type="ChEBI" id="CHEBI:57540"/>
    </ligand>
</feature>
<feature type="binding site" evidence="1">
    <location>
        <begin position="208"/>
        <end position="210"/>
    </location>
    <ligand>
        <name>NAD(+)</name>
        <dbReference type="ChEBI" id="CHEBI:57540"/>
    </ligand>
</feature>
<feature type="binding site" evidence="1">
    <location>
        <position position="226"/>
    </location>
    <ligand>
        <name>NAD(+)</name>
        <dbReference type="ChEBI" id="CHEBI:57540"/>
    </ligand>
</feature>
<reference key="1">
    <citation type="journal article" date="2002" name="Proc. Natl. Acad. Sci. U.S.A.">
        <title>Genome sequence of the hyperthermophilic crenarchaeon Pyrobaculum aerophilum.</title>
        <authorList>
            <person name="Fitz-Gibbon S.T."/>
            <person name="Ladner H."/>
            <person name="Kim U.-J."/>
            <person name="Stetter K.O."/>
            <person name="Simon M.I."/>
            <person name="Miller J.H."/>
        </authorList>
    </citation>
    <scope>NUCLEOTIDE SEQUENCE [LARGE SCALE GENOMIC DNA]</scope>
    <source>
        <strain>ATCC 51768 / DSM 7523 / JCM 9630 / CIP 104966 / NBRC 100827 / IM2</strain>
    </source>
</reference>
<name>NPD2_PYRAE</name>
<accession>Q8ZT00</accession>
<evidence type="ECO:0000255" key="1">
    <source>
        <dbReference type="HAMAP-Rule" id="MF_01121"/>
    </source>
</evidence>
<evidence type="ECO:0000255" key="2">
    <source>
        <dbReference type="PROSITE-ProRule" id="PRU00236"/>
    </source>
</evidence>
<organism>
    <name type="scientific">Pyrobaculum aerophilum (strain ATCC 51768 / DSM 7523 / JCM 9630 / CIP 104966 / NBRC 100827 / IM2)</name>
    <dbReference type="NCBI Taxonomy" id="178306"/>
    <lineage>
        <taxon>Archaea</taxon>
        <taxon>Thermoproteota</taxon>
        <taxon>Thermoprotei</taxon>
        <taxon>Thermoproteales</taxon>
        <taxon>Thermoproteaceae</taxon>
        <taxon>Pyrobaculum</taxon>
    </lineage>
</organism>
<keyword id="KW-0963">Cytoplasm</keyword>
<keyword id="KW-0479">Metal-binding</keyword>
<keyword id="KW-0520">NAD</keyword>
<keyword id="KW-1185">Reference proteome</keyword>
<keyword id="KW-0804">Transcription</keyword>
<keyword id="KW-0805">Transcription regulation</keyword>
<keyword id="KW-0808">Transferase</keyword>
<keyword id="KW-0862">Zinc</keyword>
<gene>
    <name evidence="1" type="primary">cobB2</name>
    <name type="ordered locus">PAE3500</name>
</gene>
<sequence length="249" mass="27352">MNVADLLASSRHCVVFTGAGISAESGVPTFRGPGGLWERYKPEELATPEAFARDPALVWRWYKWRQEVIYNARPSPGHYAIAELEAMGVVRGVITQNVDGLHQRAGSRLVVELHGSIWRARCVKCGSVYILDKPVEEVPPLCRKCGGLLRPDVVWFGEPLPQEAWRAAVELASVSDVLLVVGTSGVVYPAAYIPRIAKEAGARVVEINVEPSAITPIADVFIQGRAGEVLPRLVEEVKRRLRTRQALTP</sequence>
<protein>
    <recommendedName>
        <fullName evidence="1">NAD-dependent protein deacylase 2</fullName>
        <ecNumber evidence="1 2">2.3.1.286</ecNumber>
    </recommendedName>
    <alternativeName>
        <fullName evidence="1">Regulatory protein SIR2 homolog 2</fullName>
    </alternativeName>
</protein>
<proteinExistence type="inferred from homology"/>
<dbReference type="EC" id="2.3.1.286" evidence="1 2"/>
<dbReference type="EMBL" id="AE009441">
    <property type="protein sequence ID" value="AAL64963.1"/>
    <property type="molecule type" value="Genomic_DNA"/>
</dbReference>
<dbReference type="RefSeq" id="WP_011009430.1">
    <property type="nucleotide sequence ID" value="NC_003364.1"/>
</dbReference>
<dbReference type="SMR" id="Q8ZT00"/>
<dbReference type="STRING" id="178306.PAE3500"/>
<dbReference type="EnsemblBacteria" id="AAL64963">
    <property type="protein sequence ID" value="AAL64963"/>
    <property type="gene ID" value="PAE3500"/>
</dbReference>
<dbReference type="GeneID" id="1466096"/>
<dbReference type="KEGG" id="pai:PAE3500"/>
<dbReference type="PATRIC" id="fig|178306.9.peg.2636"/>
<dbReference type="eggNOG" id="arCOG04248">
    <property type="taxonomic scope" value="Archaea"/>
</dbReference>
<dbReference type="HOGENOM" id="CLU_023643_3_1_2"/>
<dbReference type="InParanoid" id="Q8ZT00"/>
<dbReference type="Proteomes" id="UP000002439">
    <property type="component" value="Chromosome"/>
</dbReference>
<dbReference type="GO" id="GO:0005737">
    <property type="term" value="C:cytoplasm"/>
    <property type="evidence" value="ECO:0007669"/>
    <property type="project" value="UniProtKB-SubCell"/>
</dbReference>
<dbReference type="GO" id="GO:0017136">
    <property type="term" value="F:histone deacetylase activity, NAD-dependent"/>
    <property type="evidence" value="ECO:0000318"/>
    <property type="project" value="GO_Central"/>
</dbReference>
<dbReference type="GO" id="GO:0070403">
    <property type="term" value="F:NAD+ binding"/>
    <property type="evidence" value="ECO:0000318"/>
    <property type="project" value="GO_Central"/>
</dbReference>
<dbReference type="GO" id="GO:0036054">
    <property type="term" value="F:protein-malonyllysine demalonylase activity"/>
    <property type="evidence" value="ECO:0007669"/>
    <property type="project" value="InterPro"/>
</dbReference>
<dbReference type="GO" id="GO:0036055">
    <property type="term" value="F:protein-succinyllysine desuccinylase activity"/>
    <property type="evidence" value="ECO:0007669"/>
    <property type="project" value="UniProtKB-UniRule"/>
</dbReference>
<dbReference type="GO" id="GO:0008270">
    <property type="term" value="F:zinc ion binding"/>
    <property type="evidence" value="ECO:0007669"/>
    <property type="project" value="UniProtKB-UniRule"/>
</dbReference>
<dbReference type="CDD" id="cd01412">
    <property type="entry name" value="SIRT5_Af1_CobB"/>
    <property type="match status" value="1"/>
</dbReference>
<dbReference type="Gene3D" id="3.30.1600.10">
    <property type="entry name" value="SIR2/SIRT2 'Small Domain"/>
    <property type="match status" value="1"/>
</dbReference>
<dbReference type="Gene3D" id="3.40.50.1220">
    <property type="entry name" value="TPP-binding domain"/>
    <property type="match status" value="1"/>
</dbReference>
<dbReference type="HAMAP" id="MF_01121">
    <property type="entry name" value="Sirtuin_ClassIII"/>
    <property type="match status" value="1"/>
</dbReference>
<dbReference type="InterPro" id="IPR029035">
    <property type="entry name" value="DHS-like_NAD/FAD-binding_dom"/>
</dbReference>
<dbReference type="InterPro" id="IPR050134">
    <property type="entry name" value="NAD-dep_sirtuin_deacylases"/>
</dbReference>
<dbReference type="InterPro" id="IPR003000">
    <property type="entry name" value="Sirtuin"/>
</dbReference>
<dbReference type="InterPro" id="IPR026591">
    <property type="entry name" value="Sirtuin_cat_small_dom_sf"/>
</dbReference>
<dbReference type="InterPro" id="IPR027546">
    <property type="entry name" value="Sirtuin_class_III"/>
</dbReference>
<dbReference type="InterPro" id="IPR026590">
    <property type="entry name" value="Ssirtuin_cat_dom"/>
</dbReference>
<dbReference type="NCBIfam" id="NF001753">
    <property type="entry name" value="PRK00481.1-3"/>
    <property type="match status" value="1"/>
</dbReference>
<dbReference type="NCBIfam" id="NF040867">
    <property type="entry name" value="prot_deacyl_CobB"/>
    <property type="match status" value="1"/>
</dbReference>
<dbReference type="PANTHER" id="PTHR11085">
    <property type="entry name" value="NAD-DEPENDENT PROTEIN DEACYLASE SIRTUIN-5, MITOCHONDRIAL-RELATED"/>
    <property type="match status" value="1"/>
</dbReference>
<dbReference type="PANTHER" id="PTHR11085:SF10">
    <property type="entry name" value="NAD-DEPENDENT PROTEIN DEACYLASE SIRTUIN-5, MITOCHONDRIAL-RELATED"/>
    <property type="match status" value="1"/>
</dbReference>
<dbReference type="Pfam" id="PF02146">
    <property type="entry name" value="SIR2"/>
    <property type="match status" value="1"/>
</dbReference>
<dbReference type="SUPFAM" id="SSF52467">
    <property type="entry name" value="DHS-like NAD/FAD-binding domain"/>
    <property type="match status" value="1"/>
</dbReference>
<dbReference type="PROSITE" id="PS50305">
    <property type="entry name" value="SIRTUIN"/>
    <property type="match status" value="1"/>
</dbReference>